<evidence type="ECO:0000255" key="1">
    <source>
        <dbReference type="HAMAP-Rule" id="MF_01315"/>
    </source>
</evidence>
<evidence type="ECO:0000305" key="2"/>
<protein>
    <recommendedName>
        <fullName evidence="1">Small ribosomal subunit protein uS13</fullName>
    </recommendedName>
    <alternativeName>
        <fullName evidence="2">30S ribosomal protein S13</fullName>
    </alternativeName>
</protein>
<feature type="chain" id="PRO_0000306755" description="Small ribosomal subunit protein uS13">
    <location>
        <begin position="1"/>
        <end position="150"/>
    </location>
</feature>
<reference key="1">
    <citation type="journal article" date="2009" name="Stand. Genomic Sci.">
        <title>Complete genome sequence of Methanocorpusculum labreanum type strain Z.</title>
        <authorList>
            <person name="Anderson I.J."/>
            <person name="Sieprawska-Lupa M."/>
            <person name="Goltsman E."/>
            <person name="Lapidus A."/>
            <person name="Copeland A."/>
            <person name="Glavina Del Rio T."/>
            <person name="Tice H."/>
            <person name="Dalin E."/>
            <person name="Barry K."/>
            <person name="Pitluck S."/>
            <person name="Hauser L."/>
            <person name="Land M."/>
            <person name="Lucas S."/>
            <person name="Richardson P."/>
            <person name="Whitman W.B."/>
            <person name="Kyrpides N.C."/>
        </authorList>
    </citation>
    <scope>NUCLEOTIDE SEQUENCE [LARGE SCALE GENOMIC DNA]</scope>
    <source>
        <strain>ATCC 43576 / DSM 4855 / Z</strain>
    </source>
</reference>
<organism>
    <name type="scientific">Methanocorpusculum labreanum (strain ATCC 43576 / DSM 4855 / Z)</name>
    <dbReference type="NCBI Taxonomy" id="410358"/>
    <lineage>
        <taxon>Archaea</taxon>
        <taxon>Methanobacteriati</taxon>
        <taxon>Methanobacteriota</taxon>
        <taxon>Stenosarchaea group</taxon>
        <taxon>Methanomicrobia</taxon>
        <taxon>Methanomicrobiales</taxon>
        <taxon>Methanocorpusculaceae</taxon>
        <taxon>Methanocorpusculum</taxon>
    </lineage>
</organism>
<dbReference type="EMBL" id="CP000559">
    <property type="protein sequence ID" value="ABN07416.1"/>
    <property type="molecule type" value="Genomic_DNA"/>
</dbReference>
<dbReference type="RefSeq" id="WP_011833619.1">
    <property type="nucleotide sequence ID" value="NC_008942.1"/>
</dbReference>
<dbReference type="SMR" id="A2SSW0"/>
<dbReference type="STRING" id="410358.Mlab_1247"/>
<dbReference type="GeneID" id="4794911"/>
<dbReference type="KEGG" id="mla:Mlab_1247"/>
<dbReference type="eggNOG" id="arCOG01722">
    <property type="taxonomic scope" value="Archaea"/>
</dbReference>
<dbReference type="HOGENOM" id="CLU_103849_0_1_2"/>
<dbReference type="OrthoDB" id="372127at2157"/>
<dbReference type="Proteomes" id="UP000000365">
    <property type="component" value="Chromosome"/>
</dbReference>
<dbReference type="GO" id="GO:0005829">
    <property type="term" value="C:cytosol"/>
    <property type="evidence" value="ECO:0007669"/>
    <property type="project" value="TreeGrafter"/>
</dbReference>
<dbReference type="GO" id="GO:0015935">
    <property type="term" value="C:small ribosomal subunit"/>
    <property type="evidence" value="ECO:0007669"/>
    <property type="project" value="TreeGrafter"/>
</dbReference>
<dbReference type="GO" id="GO:0019843">
    <property type="term" value="F:rRNA binding"/>
    <property type="evidence" value="ECO:0007669"/>
    <property type="project" value="UniProtKB-UniRule"/>
</dbReference>
<dbReference type="GO" id="GO:0003735">
    <property type="term" value="F:structural constituent of ribosome"/>
    <property type="evidence" value="ECO:0007669"/>
    <property type="project" value="InterPro"/>
</dbReference>
<dbReference type="GO" id="GO:0006412">
    <property type="term" value="P:translation"/>
    <property type="evidence" value="ECO:0007669"/>
    <property type="project" value="UniProtKB-UniRule"/>
</dbReference>
<dbReference type="FunFam" id="4.10.910.10:FF:000002">
    <property type="entry name" value="40S ribosomal protein S18"/>
    <property type="match status" value="1"/>
</dbReference>
<dbReference type="Gene3D" id="1.10.8.50">
    <property type="match status" value="1"/>
</dbReference>
<dbReference type="Gene3D" id="4.10.910.10">
    <property type="entry name" value="30s ribosomal protein s13, domain 2"/>
    <property type="match status" value="1"/>
</dbReference>
<dbReference type="HAMAP" id="MF_01315">
    <property type="entry name" value="Ribosomal_uS13"/>
    <property type="match status" value="1"/>
</dbReference>
<dbReference type="InterPro" id="IPR027437">
    <property type="entry name" value="Rbsml_uS13_C"/>
</dbReference>
<dbReference type="InterPro" id="IPR001892">
    <property type="entry name" value="Ribosomal_uS13"/>
</dbReference>
<dbReference type="InterPro" id="IPR010979">
    <property type="entry name" value="Ribosomal_uS13-like_H2TH"/>
</dbReference>
<dbReference type="InterPro" id="IPR019977">
    <property type="entry name" value="Ribosomal_uS13_archaeal"/>
</dbReference>
<dbReference type="InterPro" id="IPR018269">
    <property type="entry name" value="Ribosomal_uS13_CS"/>
</dbReference>
<dbReference type="NCBIfam" id="NF003140">
    <property type="entry name" value="PRK04053.1"/>
    <property type="match status" value="1"/>
</dbReference>
<dbReference type="NCBIfam" id="TIGR03629">
    <property type="entry name" value="uS13_arch"/>
    <property type="match status" value="1"/>
</dbReference>
<dbReference type="PANTHER" id="PTHR10871">
    <property type="entry name" value="30S RIBOSOMAL PROTEIN S13/40S RIBOSOMAL PROTEIN S18"/>
    <property type="match status" value="1"/>
</dbReference>
<dbReference type="PANTHER" id="PTHR10871:SF3">
    <property type="entry name" value="SMALL RIBOSOMAL SUBUNIT PROTEIN US13"/>
    <property type="match status" value="1"/>
</dbReference>
<dbReference type="Pfam" id="PF00416">
    <property type="entry name" value="Ribosomal_S13"/>
    <property type="match status" value="1"/>
</dbReference>
<dbReference type="PIRSF" id="PIRSF002134">
    <property type="entry name" value="Ribosomal_S13"/>
    <property type="match status" value="1"/>
</dbReference>
<dbReference type="SUPFAM" id="SSF46946">
    <property type="entry name" value="S13-like H2TH domain"/>
    <property type="match status" value="1"/>
</dbReference>
<dbReference type="PROSITE" id="PS00646">
    <property type="entry name" value="RIBOSOMAL_S13_1"/>
    <property type="match status" value="1"/>
</dbReference>
<dbReference type="PROSITE" id="PS50159">
    <property type="entry name" value="RIBOSOMAL_S13_2"/>
    <property type="match status" value="1"/>
</dbReference>
<gene>
    <name evidence="1" type="primary">rps13</name>
    <name type="ordered locus">Mlab_1247</name>
</gene>
<comment type="function">
    <text evidence="1">Located at the top of the head of the 30S subunit, it contacts several helices of the 16S rRNA. In the 70S ribosome it contacts the 23S rRNA (bridge B1a) and protein L5 of the 50S subunit (bridge B1b), connecting the 2 subunits; these bridges are implicated in subunit movement.</text>
</comment>
<comment type="subunit">
    <text evidence="1">Part of the 30S ribosomal subunit. Forms a loose heterodimer with protein S19. Forms two bridges to the 50S subunit in the 70S ribosome.</text>
</comment>
<comment type="similarity">
    <text evidence="1">Belongs to the universal ribosomal protein uS13 family.</text>
</comment>
<accession>A2SSW0</accession>
<name>RS13_METLZ</name>
<keyword id="KW-1185">Reference proteome</keyword>
<keyword id="KW-0687">Ribonucleoprotein</keyword>
<keyword id="KW-0689">Ribosomal protein</keyword>
<keyword id="KW-0694">RNA-binding</keyword>
<keyword id="KW-0699">rRNA-binding</keyword>
<sequence length="150" mass="16650">MVEESELKYFVRIINTDLDGTQPVQLALTGIKGIGLHAALIIARRAGVDTRATMGLLGDEDVAAIEEQVKAYPASVPKWMVNRPVDVYSGEPKHLYGSDLSLAKEDDINLMKKMRCYRGIRHENGLKVRGQRTKATGRFGKIVGVSKRRN</sequence>
<proteinExistence type="inferred from homology"/>